<keyword id="KW-0067">ATP-binding</keyword>
<keyword id="KW-0143">Chaperone</keyword>
<keyword id="KW-0547">Nucleotide-binding</keyword>
<protein>
    <recommendedName>
        <fullName evidence="1">Chaperone protein HscA homolog</fullName>
    </recommendedName>
</protein>
<comment type="function">
    <text evidence="1">Chaperone involved in the maturation of iron-sulfur cluster-containing proteins. Has a low intrinsic ATPase activity which is markedly stimulated by HscB.</text>
</comment>
<comment type="similarity">
    <text evidence="1">Belongs to the heat shock protein 70 family.</text>
</comment>
<sequence>MALLQISEPGMSPAPHQRRLAVGIDLGTTNSLVAAVRNSIPEVLGDERGRALLPSVVRYLPDRTTHIGYRAQDEAVRDPKNTIVSVKRFMGRGLKDVAHNEHSPYDFVDAPGMVQIKTVAGVKSPVEVSAEILATLRQRAEDSLGDDLVGAVITVPAYFDEAQRQATKDAARLAGLEVLRLLNEPTAAAIAYGLDNASEGIYAVYDLGGGTFDISILKLTKGVFEVLSTGGDSALGGDDFDQRLLCWIVEQAGLQPLSAQDMRLLMVRARAAKEALSEGDSTVIDAVLDSGEIVHLTLTDEIFDTITAHLVQKTLAPVRKALRDAGVTPDEVQGVVLVGGATRMPAIRKAVGDFFGQPPLTNLDPDRVVALGAAMQANLLAGNHAPGEDWLLLDVIPLSLGVETMGGLVEKIIPRNSTIPVARAQEFTTFKDGQTAMAIHVLQGERELASDCRSLARFELRGIPPMVAGAARIRVTYQVDADGLLSVTARETHSGVESSVTVKPSYGLADDDIARMLQEGFREAEHDMKSRALAEERVEADRLVEATTRALETDGDLLSADERAAVEALIASVREIATGEDHHAIKAAVETLSRGTDEFAARRMDRSIKSALAGRKVQELG</sequence>
<organism>
    <name type="scientific">Cupriavidus pinatubonensis (strain JMP 134 / LMG 1197)</name>
    <name type="common">Cupriavidus necator (strain JMP 134)</name>
    <dbReference type="NCBI Taxonomy" id="264198"/>
    <lineage>
        <taxon>Bacteria</taxon>
        <taxon>Pseudomonadati</taxon>
        <taxon>Pseudomonadota</taxon>
        <taxon>Betaproteobacteria</taxon>
        <taxon>Burkholderiales</taxon>
        <taxon>Burkholderiaceae</taxon>
        <taxon>Cupriavidus</taxon>
    </lineage>
</organism>
<dbReference type="EMBL" id="CP000090">
    <property type="protein sequence ID" value="AAZ60441.1"/>
    <property type="molecule type" value="Genomic_DNA"/>
</dbReference>
<dbReference type="SMR" id="Q473J2"/>
<dbReference type="STRING" id="264198.Reut_A1063"/>
<dbReference type="KEGG" id="reu:Reut_A1063"/>
<dbReference type="eggNOG" id="COG0443">
    <property type="taxonomic scope" value="Bacteria"/>
</dbReference>
<dbReference type="HOGENOM" id="CLU_005965_2_1_4"/>
<dbReference type="OrthoDB" id="9766019at2"/>
<dbReference type="GO" id="GO:0005524">
    <property type="term" value="F:ATP binding"/>
    <property type="evidence" value="ECO:0007669"/>
    <property type="project" value="UniProtKB-KW"/>
</dbReference>
<dbReference type="GO" id="GO:0016887">
    <property type="term" value="F:ATP hydrolysis activity"/>
    <property type="evidence" value="ECO:0007669"/>
    <property type="project" value="UniProtKB-UniRule"/>
</dbReference>
<dbReference type="GO" id="GO:0140662">
    <property type="term" value="F:ATP-dependent protein folding chaperone"/>
    <property type="evidence" value="ECO:0007669"/>
    <property type="project" value="InterPro"/>
</dbReference>
<dbReference type="GO" id="GO:0051082">
    <property type="term" value="F:unfolded protein binding"/>
    <property type="evidence" value="ECO:0007669"/>
    <property type="project" value="InterPro"/>
</dbReference>
<dbReference type="GO" id="GO:0016226">
    <property type="term" value="P:iron-sulfur cluster assembly"/>
    <property type="evidence" value="ECO:0007669"/>
    <property type="project" value="InterPro"/>
</dbReference>
<dbReference type="CDD" id="cd10236">
    <property type="entry name" value="ASKHA_NBD_HSP70_HscA"/>
    <property type="match status" value="1"/>
</dbReference>
<dbReference type="FunFam" id="3.30.420.40:FF:000046">
    <property type="entry name" value="Chaperone protein HscA"/>
    <property type="match status" value="1"/>
</dbReference>
<dbReference type="FunFam" id="2.60.34.10:FF:000005">
    <property type="entry name" value="Chaperone protein HscA homolog"/>
    <property type="match status" value="1"/>
</dbReference>
<dbReference type="Gene3D" id="1.20.1270.10">
    <property type="match status" value="1"/>
</dbReference>
<dbReference type="Gene3D" id="3.30.420.40">
    <property type="match status" value="2"/>
</dbReference>
<dbReference type="Gene3D" id="3.90.640.10">
    <property type="entry name" value="Actin, Chain A, domain 4"/>
    <property type="match status" value="1"/>
</dbReference>
<dbReference type="Gene3D" id="2.60.34.10">
    <property type="entry name" value="Substrate Binding Domain Of DNAk, Chain A, domain 1"/>
    <property type="match status" value="1"/>
</dbReference>
<dbReference type="HAMAP" id="MF_00679">
    <property type="entry name" value="HscA"/>
    <property type="match status" value="1"/>
</dbReference>
<dbReference type="InterPro" id="IPR043129">
    <property type="entry name" value="ATPase_NBD"/>
</dbReference>
<dbReference type="InterPro" id="IPR018181">
    <property type="entry name" value="Heat_shock_70_CS"/>
</dbReference>
<dbReference type="InterPro" id="IPR042039">
    <property type="entry name" value="HscA_NBD"/>
</dbReference>
<dbReference type="InterPro" id="IPR029048">
    <property type="entry name" value="HSP70_C_sf"/>
</dbReference>
<dbReference type="InterPro" id="IPR029047">
    <property type="entry name" value="HSP70_peptide-bd_sf"/>
</dbReference>
<dbReference type="InterPro" id="IPR013126">
    <property type="entry name" value="Hsp_70_fam"/>
</dbReference>
<dbReference type="InterPro" id="IPR010236">
    <property type="entry name" value="ISC_FeS_clus_asmbl_HscA"/>
</dbReference>
<dbReference type="NCBIfam" id="TIGR01991">
    <property type="entry name" value="HscA"/>
    <property type="match status" value="1"/>
</dbReference>
<dbReference type="NCBIfam" id="NF003520">
    <property type="entry name" value="PRK05183.1"/>
    <property type="match status" value="1"/>
</dbReference>
<dbReference type="PANTHER" id="PTHR19375">
    <property type="entry name" value="HEAT SHOCK PROTEIN 70KDA"/>
    <property type="match status" value="1"/>
</dbReference>
<dbReference type="Pfam" id="PF00012">
    <property type="entry name" value="HSP70"/>
    <property type="match status" value="1"/>
</dbReference>
<dbReference type="PRINTS" id="PR00301">
    <property type="entry name" value="HEATSHOCK70"/>
</dbReference>
<dbReference type="SUPFAM" id="SSF53067">
    <property type="entry name" value="Actin-like ATPase domain"/>
    <property type="match status" value="2"/>
</dbReference>
<dbReference type="SUPFAM" id="SSF100934">
    <property type="entry name" value="Heat shock protein 70kD (HSP70), C-terminal subdomain"/>
    <property type="match status" value="1"/>
</dbReference>
<dbReference type="SUPFAM" id="SSF100920">
    <property type="entry name" value="Heat shock protein 70kD (HSP70), peptide-binding domain"/>
    <property type="match status" value="1"/>
</dbReference>
<dbReference type="PROSITE" id="PS00297">
    <property type="entry name" value="HSP70_1"/>
    <property type="match status" value="1"/>
</dbReference>
<dbReference type="PROSITE" id="PS00329">
    <property type="entry name" value="HSP70_2"/>
    <property type="match status" value="1"/>
</dbReference>
<dbReference type="PROSITE" id="PS01036">
    <property type="entry name" value="HSP70_3"/>
    <property type="match status" value="1"/>
</dbReference>
<feature type="chain" id="PRO_1000044879" description="Chaperone protein HscA homolog">
    <location>
        <begin position="1"/>
        <end position="621"/>
    </location>
</feature>
<proteinExistence type="inferred from homology"/>
<reference key="1">
    <citation type="journal article" date="2010" name="PLoS ONE">
        <title>The complete multipartite genome sequence of Cupriavidus necator JMP134, a versatile pollutant degrader.</title>
        <authorList>
            <person name="Lykidis A."/>
            <person name="Perez-Pantoja D."/>
            <person name="Ledger T."/>
            <person name="Mavromatis K."/>
            <person name="Anderson I.J."/>
            <person name="Ivanova N.N."/>
            <person name="Hooper S.D."/>
            <person name="Lapidus A."/>
            <person name="Lucas S."/>
            <person name="Gonzalez B."/>
            <person name="Kyrpides N.C."/>
        </authorList>
    </citation>
    <scope>NUCLEOTIDE SEQUENCE [LARGE SCALE GENOMIC DNA]</scope>
    <source>
        <strain>JMP134 / LMG 1197</strain>
    </source>
</reference>
<accession>Q473J2</accession>
<gene>
    <name evidence="1" type="primary">hscA</name>
    <name type="ordered locus">Reut_A1063</name>
</gene>
<name>HSCA_CUPPJ</name>
<evidence type="ECO:0000255" key="1">
    <source>
        <dbReference type="HAMAP-Rule" id="MF_00679"/>
    </source>
</evidence>